<keyword id="KW-0143">Chaperone</keyword>
<keyword id="KW-0963">Cytoplasm</keyword>
<keyword id="KW-0653">Protein transport</keyword>
<keyword id="KW-0811">Translocation</keyword>
<keyword id="KW-0813">Transport</keyword>
<reference key="1">
    <citation type="journal article" date="2007" name="PLoS ONE">
        <title>Complete genomic characterization of a pathogenic A.II strain of Francisella tularensis subspecies tularensis.</title>
        <authorList>
            <person name="Beckstrom-Sternberg S.M."/>
            <person name="Auerbach R.K."/>
            <person name="Godbole S."/>
            <person name="Pearson J.V."/>
            <person name="Beckstrom-Sternberg J.S."/>
            <person name="Deng Z."/>
            <person name="Munk C."/>
            <person name="Kubota K."/>
            <person name="Zhou Y."/>
            <person name="Bruce D."/>
            <person name="Noronha J."/>
            <person name="Scheuermann R.H."/>
            <person name="Wang A."/>
            <person name="Wei X."/>
            <person name="Wang J."/>
            <person name="Hao J."/>
            <person name="Wagner D.M."/>
            <person name="Brettin T.S."/>
            <person name="Brown N."/>
            <person name="Gilna P."/>
            <person name="Keim P.S."/>
        </authorList>
    </citation>
    <scope>NUCLEOTIDE SEQUENCE [LARGE SCALE GENOMIC DNA]</scope>
    <source>
        <strain>WY96-3418</strain>
    </source>
</reference>
<comment type="function">
    <text evidence="1">One of the proteins required for the normal export of preproteins out of the cell cytoplasm. It is a molecular chaperone that binds to a subset of precursor proteins, maintaining them in a translocation-competent state. It also specifically binds to its receptor SecA.</text>
</comment>
<comment type="subunit">
    <text evidence="1">Homotetramer, a dimer of dimers. One homotetramer interacts with 1 SecA dimer.</text>
</comment>
<comment type="subcellular location">
    <subcellularLocation>
        <location evidence="1">Cytoplasm</location>
    </subcellularLocation>
</comment>
<comment type="similarity">
    <text evidence="1">Belongs to the SecB family.</text>
</comment>
<protein>
    <recommendedName>
        <fullName evidence="1">Protein-export protein SecB 1</fullName>
    </recommendedName>
</protein>
<dbReference type="EMBL" id="CP000608">
    <property type="protein sequence ID" value="ABO46663.1"/>
    <property type="molecule type" value="Genomic_DNA"/>
</dbReference>
<dbReference type="SMR" id="A4IXL1"/>
<dbReference type="KEGG" id="ftw:FTW_0791"/>
<dbReference type="HOGENOM" id="CLU_111574_1_0_6"/>
<dbReference type="GO" id="GO:0005737">
    <property type="term" value="C:cytoplasm"/>
    <property type="evidence" value="ECO:0007669"/>
    <property type="project" value="UniProtKB-SubCell"/>
</dbReference>
<dbReference type="GO" id="GO:0051082">
    <property type="term" value="F:unfolded protein binding"/>
    <property type="evidence" value="ECO:0007669"/>
    <property type="project" value="InterPro"/>
</dbReference>
<dbReference type="GO" id="GO:0006457">
    <property type="term" value="P:protein folding"/>
    <property type="evidence" value="ECO:0007669"/>
    <property type="project" value="UniProtKB-UniRule"/>
</dbReference>
<dbReference type="GO" id="GO:0051262">
    <property type="term" value="P:protein tetramerization"/>
    <property type="evidence" value="ECO:0007669"/>
    <property type="project" value="InterPro"/>
</dbReference>
<dbReference type="GO" id="GO:0015031">
    <property type="term" value="P:protein transport"/>
    <property type="evidence" value="ECO:0007669"/>
    <property type="project" value="UniProtKB-UniRule"/>
</dbReference>
<dbReference type="Gene3D" id="3.10.420.10">
    <property type="entry name" value="SecB-like"/>
    <property type="match status" value="1"/>
</dbReference>
<dbReference type="HAMAP" id="MF_00821">
    <property type="entry name" value="SecB"/>
    <property type="match status" value="1"/>
</dbReference>
<dbReference type="InterPro" id="IPR003708">
    <property type="entry name" value="SecB"/>
</dbReference>
<dbReference type="InterPro" id="IPR035958">
    <property type="entry name" value="SecB-like_sf"/>
</dbReference>
<dbReference type="NCBIfam" id="NF004391">
    <property type="entry name" value="PRK05751.1-2"/>
    <property type="match status" value="1"/>
</dbReference>
<dbReference type="NCBIfam" id="TIGR00809">
    <property type="entry name" value="secB"/>
    <property type="match status" value="1"/>
</dbReference>
<dbReference type="PANTHER" id="PTHR36918">
    <property type="match status" value="1"/>
</dbReference>
<dbReference type="PANTHER" id="PTHR36918:SF1">
    <property type="entry name" value="PROTEIN-EXPORT PROTEIN SECB"/>
    <property type="match status" value="1"/>
</dbReference>
<dbReference type="Pfam" id="PF02556">
    <property type="entry name" value="SecB"/>
    <property type="match status" value="1"/>
</dbReference>
<dbReference type="PRINTS" id="PR01594">
    <property type="entry name" value="SECBCHAPRONE"/>
</dbReference>
<dbReference type="SUPFAM" id="SSF54611">
    <property type="entry name" value="SecB-like"/>
    <property type="match status" value="1"/>
</dbReference>
<proteinExistence type="inferred from homology"/>
<name>SECB1_FRATW</name>
<feature type="chain" id="PRO_0000318236" description="Protein-export protein SecB 1">
    <location>
        <begin position="1"/>
        <end position="147"/>
    </location>
</feature>
<gene>
    <name evidence="1" type="primary">secB1</name>
    <name type="ordered locus">FTW_0791</name>
</gene>
<evidence type="ECO:0000255" key="1">
    <source>
        <dbReference type="HAMAP-Rule" id="MF_00821"/>
    </source>
</evidence>
<accession>A4IXL1</accession>
<organism>
    <name type="scientific">Francisella tularensis subsp. tularensis (strain WY96-3418)</name>
    <dbReference type="NCBI Taxonomy" id="418136"/>
    <lineage>
        <taxon>Bacteria</taxon>
        <taxon>Pseudomonadati</taxon>
        <taxon>Pseudomonadota</taxon>
        <taxon>Gammaproteobacteria</taxon>
        <taxon>Thiotrichales</taxon>
        <taxon>Francisellaceae</taxon>
        <taxon>Francisella</taxon>
    </lineage>
</organism>
<sequence length="147" mass="16699">MQNNEIQPSFLIQKVYTKDVSFETINSPACFKEQWNPSSDFNIDINTTKINDENFELDLTITVTTKNNETNAYIAEVTQSGIFTITSMSEEQIDSVLNTYCANTLFPYAKRIIDSSIIKGGFLPLNLAPINFDAIYLQKKSSPKREH</sequence>